<evidence type="ECO:0000255" key="1">
    <source>
        <dbReference type="HAMAP-Rule" id="MF_01077"/>
    </source>
</evidence>
<dbReference type="EMBL" id="AE015929">
    <property type="protein sequence ID" value="AAO04538.1"/>
    <property type="molecule type" value="Genomic_DNA"/>
</dbReference>
<dbReference type="RefSeq" id="NP_764496.1">
    <property type="nucleotide sequence ID" value="NC_004461.1"/>
</dbReference>
<dbReference type="RefSeq" id="WP_002439519.1">
    <property type="nucleotide sequence ID" value="NZ_WBME01000001.1"/>
</dbReference>
<dbReference type="SMR" id="Q8CST6"/>
<dbReference type="GeneID" id="50018923"/>
<dbReference type="KEGG" id="sep:SE_0941"/>
<dbReference type="PATRIC" id="fig|176280.10.peg.916"/>
<dbReference type="eggNOG" id="COG0779">
    <property type="taxonomic scope" value="Bacteria"/>
</dbReference>
<dbReference type="HOGENOM" id="CLU_070525_2_0_9"/>
<dbReference type="OrthoDB" id="9805006at2"/>
<dbReference type="Proteomes" id="UP000001411">
    <property type="component" value="Chromosome"/>
</dbReference>
<dbReference type="GO" id="GO:0005829">
    <property type="term" value="C:cytosol"/>
    <property type="evidence" value="ECO:0007669"/>
    <property type="project" value="TreeGrafter"/>
</dbReference>
<dbReference type="GO" id="GO:0000028">
    <property type="term" value="P:ribosomal small subunit assembly"/>
    <property type="evidence" value="ECO:0007669"/>
    <property type="project" value="TreeGrafter"/>
</dbReference>
<dbReference type="GO" id="GO:0006412">
    <property type="term" value="P:translation"/>
    <property type="evidence" value="ECO:0007669"/>
    <property type="project" value="TreeGrafter"/>
</dbReference>
<dbReference type="CDD" id="cd01734">
    <property type="entry name" value="YlxS_C"/>
    <property type="match status" value="1"/>
</dbReference>
<dbReference type="FunFam" id="3.30.300.70:FF:000001">
    <property type="entry name" value="Ribosome maturation factor RimP"/>
    <property type="match status" value="1"/>
</dbReference>
<dbReference type="Gene3D" id="2.30.30.180">
    <property type="entry name" value="Ribosome maturation factor RimP, C-terminal domain"/>
    <property type="match status" value="1"/>
</dbReference>
<dbReference type="Gene3D" id="3.30.300.70">
    <property type="entry name" value="RimP-like superfamily, N-terminal"/>
    <property type="match status" value="1"/>
</dbReference>
<dbReference type="HAMAP" id="MF_01077">
    <property type="entry name" value="RimP"/>
    <property type="match status" value="1"/>
</dbReference>
<dbReference type="InterPro" id="IPR003728">
    <property type="entry name" value="Ribosome_maturation_RimP"/>
</dbReference>
<dbReference type="InterPro" id="IPR028998">
    <property type="entry name" value="RimP_C"/>
</dbReference>
<dbReference type="InterPro" id="IPR036847">
    <property type="entry name" value="RimP_C_sf"/>
</dbReference>
<dbReference type="InterPro" id="IPR028989">
    <property type="entry name" value="RimP_N"/>
</dbReference>
<dbReference type="InterPro" id="IPR035956">
    <property type="entry name" value="RimP_N_sf"/>
</dbReference>
<dbReference type="NCBIfam" id="NF000928">
    <property type="entry name" value="PRK00092.1-2"/>
    <property type="match status" value="1"/>
</dbReference>
<dbReference type="PANTHER" id="PTHR33867">
    <property type="entry name" value="RIBOSOME MATURATION FACTOR RIMP"/>
    <property type="match status" value="1"/>
</dbReference>
<dbReference type="PANTHER" id="PTHR33867:SF1">
    <property type="entry name" value="RIBOSOME MATURATION FACTOR RIMP"/>
    <property type="match status" value="1"/>
</dbReference>
<dbReference type="Pfam" id="PF17384">
    <property type="entry name" value="DUF150_C"/>
    <property type="match status" value="1"/>
</dbReference>
<dbReference type="Pfam" id="PF02576">
    <property type="entry name" value="RimP_N"/>
    <property type="match status" value="1"/>
</dbReference>
<dbReference type="SUPFAM" id="SSF74942">
    <property type="entry name" value="YhbC-like, C-terminal domain"/>
    <property type="match status" value="1"/>
</dbReference>
<dbReference type="SUPFAM" id="SSF75420">
    <property type="entry name" value="YhbC-like, N-terminal domain"/>
    <property type="match status" value="1"/>
</dbReference>
<accession>Q8CST6</accession>
<organism>
    <name type="scientific">Staphylococcus epidermidis (strain ATCC 12228 / FDA PCI 1200)</name>
    <dbReference type="NCBI Taxonomy" id="176280"/>
    <lineage>
        <taxon>Bacteria</taxon>
        <taxon>Bacillati</taxon>
        <taxon>Bacillota</taxon>
        <taxon>Bacilli</taxon>
        <taxon>Bacillales</taxon>
        <taxon>Staphylococcaceae</taxon>
        <taxon>Staphylococcus</taxon>
    </lineage>
</organism>
<feature type="chain" id="PRO_0000181925" description="Ribosome maturation factor RimP">
    <location>
        <begin position="1"/>
        <end position="155"/>
    </location>
</feature>
<proteinExistence type="inferred from homology"/>
<keyword id="KW-0963">Cytoplasm</keyword>
<keyword id="KW-0690">Ribosome biogenesis</keyword>
<gene>
    <name evidence="1" type="primary">rimP</name>
    <name type="ordered locus">SE_0941</name>
</gene>
<reference key="1">
    <citation type="journal article" date="2003" name="Mol. Microbiol.">
        <title>Genome-based analysis of virulence genes in a non-biofilm-forming Staphylococcus epidermidis strain (ATCC 12228).</title>
        <authorList>
            <person name="Zhang Y.-Q."/>
            <person name="Ren S.-X."/>
            <person name="Li H.-L."/>
            <person name="Wang Y.-X."/>
            <person name="Fu G."/>
            <person name="Yang J."/>
            <person name="Qin Z.-Q."/>
            <person name="Miao Y.-G."/>
            <person name="Wang W.-Y."/>
            <person name="Chen R.-S."/>
            <person name="Shen Y."/>
            <person name="Chen Z."/>
            <person name="Yuan Z.-H."/>
            <person name="Zhao G.-P."/>
            <person name="Qu D."/>
            <person name="Danchin A."/>
            <person name="Wen Y.-M."/>
        </authorList>
    </citation>
    <scope>NUCLEOTIDE SEQUENCE [LARGE SCALE GENOMIC DNA]</scope>
    <source>
        <strain>ATCC 12228 / FDA PCI 1200</strain>
    </source>
</reference>
<sequence length="155" mass="17638">MSKITEQVEALIQPVLNDLNFELVDIEYVKEGKDHFLRISIDKEGGVDLNDCTIASEKISEVMDENDPIPEMYYLDVASPGAERPIKKEKDFYNAINQPIFVSLYAPIEGDKEWLGVLKSVNDESINMEVKEKAKTKEIEIPRNKIAKARHAVMI</sequence>
<protein>
    <recommendedName>
        <fullName evidence="1">Ribosome maturation factor RimP</fullName>
    </recommendedName>
</protein>
<name>RIMP_STAES</name>
<comment type="function">
    <text evidence="1">Required for maturation of 30S ribosomal subunits.</text>
</comment>
<comment type="subcellular location">
    <subcellularLocation>
        <location evidence="1">Cytoplasm</location>
    </subcellularLocation>
</comment>
<comment type="similarity">
    <text evidence="1">Belongs to the RimP family.</text>
</comment>